<sequence length="611" mass="68103">MEPAAPSCNMIMIADQASVNAHGRHLDENRVYPSDKVPAHVANKILESGTETVRCDLTLEDMLGDYEYDDPTEEEKILMDRIADHVGNDNSDMAIKHAAGPEMNIDIVTAAASMSGITTASHSALPIRRPNTPDFRRHSEKKAKKHKNKQRQRLDDVVAKLHKPSESEADEDFIFQQPQEEEYQEEQEPQVISSSPQHFDERSPSRSSSDHGGHSGGNSRDGQFYLSSGSEDEDDEDDERVDSGYRGSSRSEDSSRYRPHGGSHSSRSSIKSSGSGSSRHHHKRKAVPERHHPFTPPSAKRYAAAAPSSRYECPVRVDSSDSDDAPTMVQRGTLKIKSFRPPSSGSNSNKHSSSSGGSTSSSHKKQQQQQAPSKKPVMSSGSDKIRDMVDRTAGGYVAPNAHKKCREDKSRKYPARALEYKNLPFRPQSPQYLLGKAIQFCKEETVHDKFIMLFYTRSQDVRKAVDETRARMGMRPNLSISCPFMTEHTKPINHSRETIDRTSAACTAGTQAVWDMEERRGQKCVPRTSDYRSMIIQAANPPDFLGAVKTCLHLSQVFPKQVCMRLCSITGGLNPLPIYEETVSSYVNAQFEADDISHHEDESGEYESDCE</sequence>
<proteinExistence type="predicted"/>
<feature type="chain" id="PRO_0000115358" description="Immediate-early protein 3">
    <location>
        <begin position="1"/>
        <end position="611"/>
    </location>
</feature>
<feature type="region of interest" description="Disordered" evidence="2">
    <location>
        <begin position="119"/>
        <end position="155"/>
    </location>
</feature>
<feature type="region of interest" description="Disordered" evidence="2">
    <location>
        <begin position="180"/>
        <end position="383"/>
    </location>
</feature>
<feature type="short sequence motif" description="Nuclear localization signal" evidence="1">
    <location>
        <begin position="141"/>
        <end position="147"/>
    </location>
</feature>
<feature type="short sequence motif" description="Nuclear localization signal" evidence="1">
    <location>
        <begin position="279"/>
        <end position="285"/>
    </location>
</feature>
<feature type="compositionally biased region" description="Basic residues" evidence="2">
    <location>
        <begin position="138"/>
        <end position="151"/>
    </location>
</feature>
<feature type="compositionally biased region" description="Basic and acidic residues" evidence="2">
    <location>
        <begin position="198"/>
        <end position="213"/>
    </location>
</feature>
<feature type="compositionally biased region" description="Acidic residues" evidence="2">
    <location>
        <begin position="230"/>
        <end position="240"/>
    </location>
</feature>
<feature type="compositionally biased region" description="Low complexity" evidence="2">
    <location>
        <begin position="260"/>
        <end position="277"/>
    </location>
</feature>
<feature type="compositionally biased region" description="Low complexity" evidence="2">
    <location>
        <begin position="341"/>
        <end position="376"/>
    </location>
</feature>
<organismHost>
    <name type="scientific">Mus musculus</name>
    <name type="common">Mouse</name>
    <dbReference type="NCBI Taxonomy" id="10090"/>
</organismHost>
<accession>P29832</accession>
<gene>
    <name type="primary">IE1</name>
</gene>
<protein>
    <recommendedName>
        <fullName>Immediate-early protein 3</fullName>
        <shortName>IE3</shortName>
    </recommendedName>
</protein>
<reference key="1">
    <citation type="journal article" date="1992" name="J. Virol.">
        <title>Structural organization, expression, and functional characterization of the murine cytomegalovirus immediate-early gene 3.</title>
        <authorList>
            <person name="Messerle M."/>
            <person name="Buehler B."/>
            <person name="Keil G.M."/>
            <person name="Koszinowski U.H."/>
        </authorList>
    </citation>
    <scope>NUCLEOTIDE SEQUENCE [GENOMIC DNA]</scope>
    <source>
        <strain>Isolate ATCC VR-1399</strain>
    </source>
</reference>
<reference key="2">
    <citation type="journal article" date="1996" name="J. Virol.">
        <title>Analysis of the complete DNA sequence of murine cytomegalovirus.</title>
        <authorList>
            <person name="Rawlinson W.D."/>
            <person name="Farrell H.E."/>
            <person name="Barrell B.G."/>
        </authorList>
    </citation>
    <scope>NUCLEOTIDE SEQUENCE [LARGE SCALE GENOMIC DNA]</scope>
</reference>
<dbReference type="EMBL" id="L06816">
    <property type="protein sequence ID" value="AAA74505.1"/>
    <property type="molecule type" value="Genomic_DNA"/>
</dbReference>
<dbReference type="EMBL" id="M77846">
    <property type="protein sequence ID" value="AAA45948.1"/>
    <property type="molecule type" value="Genomic_DNA"/>
</dbReference>
<dbReference type="EMBL" id="U68299">
    <property type="status" value="NOT_ANNOTATED_CDS"/>
    <property type="molecule type" value="Genomic_DNA"/>
</dbReference>
<dbReference type="PIR" id="A40835">
    <property type="entry name" value="EDBESM"/>
</dbReference>
<dbReference type="SMR" id="P29832"/>
<dbReference type="Proteomes" id="UP000008774">
    <property type="component" value="Segment"/>
</dbReference>
<dbReference type="GO" id="GO:0042025">
    <property type="term" value="C:host cell nucleus"/>
    <property type="evidence" value="ECO:0007669"/>
    <property type="project" value="UniProtKB-SubCell"/>
</dbReference>
<dbReference type="GO" id="GO:0006355">
    <property type="term" value="P:regulation of DNA-templated transcription"/>
    <property type="evidence" value="ECO:0007669"/>
    <property type="project" value="InterPro"/>
</dbReference>
<dbReference type="GO" id="GO:0039645">
    <property type="term" value="P:symbiont-mediated perturbation of host cell cycle G1/S transition checkpoint"/>
    <property type="evidence" value="ECO:0007669"/>
    <property type="project" value="UniProtKB-KW"/>
</dbReference>
<dbReference type="InterPro" id="IPR005028">
    <property type="entry name" value="Herpes_IE2_3"/>
</dbReference>
<dbReference type="Pfam" id="PF03361">
    <property type="entry name" value="Herpes_IE2_3"/>
    <property type="match status" value="1"/>
</dbReference>
<name>VIE3_MUHVS</name>
<evidence type="ECO:0000255" key="1"/>
<evidence type="ECO:0000256" key="2">
    <source>
        <dbReference type="SAM" id="MobiDB-lite"/>
    </source>
</evidence>
<evidence type="ECO:0000305" key="3"/>
<comment type="function">
    <text>Strong transcriptional activator of the E1 promoter, shows an autoregulatory function by repression of the IE1/IE3 promoter. The IE1 protein has some additive effect on the trans-activating properties of the IE3 protein.</text>
</comment>
<comment type="subcellular location">
    <subcellularLocation>
        <location evidence="3">Host nucleus</location>
    </subcellularLocation>
</comment>
<comment type="alternative products">
    <event type="alternative splicing"/>
    <isoform>
        <id>P29832-1</id>
        <name>IE1</name>
        <sequence type="displayed"/>
    </isoform>
    <isoform>
        <id>P29832-2</id>
        <name>IE3</name>
        <sequence type="not described"/>
    </isoform>
</comment>
<organism>
    <name type="scientific">Murid herpesvirus 1 (strain Smith)</name>
    <name type="common">MuHV-1</name>
    <name type="synonym">Mouse cytomegalovirus</name>
    <dbReference type="NCBI Taxonomy" id="10367"/>
    <lineage>
        <taxon>Viruses</taxon>
        <taxon>Duplodnaviria</taxon>
        <taxon>Heunggongvirae</taxon>
        <taxon>Peploviricota</taxon>
        <taxon>Herviviricetes</taxon>
        <taxon>Herpesvirales</taxon>
        <taxon>Orthoherpesviridae</taxon>
        <taxon>Betaherpesvirinae</taxon>
        <taxon>Muromegalovirus</taxon>
        <taxon>Muromegalovirus muridbeta1</taxon>
        <taxon>Murid herpesvirus 1</taxon>
    </lineage>
</organism>
<keyword id="KW-0010">Activator</keyword>
<keyword id="KW-0025">Alternative splicing</keyword>
<keyword id="KW-0244">Early protein</keyword>
<keyword id="KW-1078">G1/S host cell cycle checkpoint dysregulation by virus</keyword>
<keyword id="KW-1048">Host nucleus</keyword>
<keyword id="KW-0945">Host-virus interaction</keyword>
<keyword id="KW-1121">Modulation of host cell cycle by virus</keyword>
<keyword id="KW-0597">Phosphoprotein</keyword>
<keyword id="KW-1185">Reference proteome</keyword>
<keyword id="KW-0804">Transcription</keyword>
<keyword id="KW-0805">Transcription regulation</keyword>